<dbReference type="EC" id="2.7.7.8" evidence="1"/>
<dbReference type="EMBL" id="AM889285">
    <property type="protein sequence ID" value="CAP55314.1"/>
    <property type="molecule type" value="Genomic_DNA"/>
</dbReference>
<dbReference type="EMBL" id="CP001189">
    <property type="protein sequence ID" value="ACI51835.1"/>
    <property type="molecule type" value="Genomic_DNA"/>
</dbReference>
<dbReference type="RefSeq" id="WP_012224617.1">
    <property type="nucleotide sequence ID" value="NC_010125.1"/>
</dbReference>
<dbReference type="SMR" id="A9HF35"/>
<dbReference type="STRING" id="272568.GDI1371"/>
<dbReference type="KEGG" id="gdi:GDI1371"/>
<dbReference type="KEGG" id="gdj:Gdia_2075"/>
<dbReference type="eggNOG" id="COG1185">
    <property type="taxonomic scope" value="Bacteria"/>
</dbReference>
<dbReference type="HOGENOM" id="CLU_004217_2_2_5"/>
<dbReference type="OrthoDB" id="9804305at2"/>
<dbReference type="Proteomes" id="UP000001176">
    <property type="component" value="Chromosome"/>
</dbReference>
<dbReference type="GO" id="GO:0005829">
    <property type="term" value="C:cytosol"/>
    <property type="evidence" value="ECO:0007669"/>
    <property type="project" value="TreeGrafter"/>
</dbReference>
<dbReference type="GO" id="GO:0000175">
    <property type="term" value="F:3'-5'-RNA exonuclease activity"/>
    <property type="evidence" value="ECO:0007669"/>
    <property type="project" value="TreeGrafter"/>
</dbReference>
<dbReference type="GO" id="GO:0000287">
    <property type="term" value="F:magnesium ion binding"/>
    <property type="evidence" value="ECO:0007669"/>
    <property type="project" value="UniProtKB-UniRule"/>
</dbReference>
<dbReference type="GO" id="GO:0004654">
    <property type="term" value="F:polyribonucleotide nucleotidyltransferase activity"/>
    <property type="evidence" value="ECO:0007669"/>
    <property type="project" value="UniProtKB-UniRule"/>
</dbReference>
<dbReference type="GO" id="GO:0003723">
    <property type="term" value="F:RNA binding"/>
    <property type="evidence" value="ECO:0007669"/>
    <property type="project" value="UniProtKB-UniRule"/>
</dbReference>
<dbReference type="GO" id="GO:0006402">
    <property type="term" value="P:mRNA catabolic process"/>
    <property type="evidence" value="ECO:0007669"/>
    <property type="project" value="UniProtKB-UniRule"/>
</dbReference>
<dbReference type="GO" id="GO:0006396">
    <property type="term" value="P:RNA processing"/>
    <property type="evidence" value="ECO:0007669"/>
    <property type="project" value="InterPro"/>
</dbReference>
<dbReference type="CDD" id="cd02393">
    <property type="entry name" value="KH-I_PNPase"/>
    <property type="match status" value="1"/>
</dbReference>
<dbReference type="CDD" id="cd11363">
    <property type="entry name" value="RNase_PH_PNPase_1"/>
    <property type="match status" value="1"/>
</dbReference>
<dbReference type="CDD" id="cd11364">
    <property type="entry name" value="RNase_PH_PNPase_2"/>
    <property type="match status" value="1"/>
</dbReference>
<dbReference type="CDD" id="cd04472">
    <property type="entry name" value="S1_PNPase"/>
    <property type="match status" value="1"/>
</dbReference>
<dbReference type="FunFam" id="2.40.50.140:FF:000107">
    <property type="entry name" value="Polyribonucleotide nucleotidyltransferase"/>
    <property type="match status" value="1"/>
</dbReference>
<dbReference type="FunFam" id="3.30.1370.10:FF:000001">
    <property type="entry name" value="Polyribonucleotide nucleotidyltransferase"/>
    <property type="match status" value="1"/>
</dbReference>
<dbReference type="FunFam" id="3.30.230.70:FF:000001">
    <property type="entry name" value="Polyribonucleotide nucleotidyltransferase"/>
    <property type="match status" value="1"/>
</dbReference>
<dbReference type="FunFam" id="3.30.230.70:FF:000002">
    <property type="entry name" value="Polyribonucleotide nucleotidyltransferase"/>
    <property type="match status" value="1"/>
</dbReference>
<dbReference type="Gene3D" id="3.30.230.70">
    <property type="entry name" value="GHMP Kinase, N-terminal domain"/>
    <property type="match status" value="2"/>
</dbReference>
<dbReference type="Gene3D" id="3.30.1370.10">
    <property type="entry name" value="K Homology domain, type 1"/>
    <property type="match status" value="1"/>
</dbReference>
<dbReference type="Gene3D" id="2.40.50.140">
    <property type="entry name" value="Nucleic acid-binding proteins"/>
    <property type="match status" value="1"/>
</dbReference>
<dbReference type="HAMAP" id="MF_01595">
    <property type="entry name" value="PNPase"/>
    <property type="match status" value="1"/>
</dbReference>
<dbReference type="InterPro" id="IPR001247">
    <property type="entry name" value="ExoRNase_PH_dom1"/>
</dbReference>
<dbReference type="InterPro" id="IPR015847">
    <property type="entry name" value="ExoRNase_PH_dom2"/>
</dbReference>
<dbReference type="InterPro" id="IPR036345">
    <property type="entry name" value="ExoRNase_PH_dom2_sf"/>
</dbReference>
<dbReference type="InterPro" id="IPR004087">
    <property type="entry name" value="KH_dom"/>
</dbReference>
<dbReference type="InterPro" id="IPR004088">
    <property type="entry name" value="KH_dom_type_1"/>
</dbReference>
<dbReference type="InterPro" id="IPR036612">
    <property type="entry name" value="KH_dom_type_1_sf"/>
</dbReference>
<dbReference type="InterPro" id="IPR012340">
    <property type="entry name" value="NA-bd_OB-fold"/>
</dbReference>
<dbReference type="InterPro" id="IPR012162">
    <property type="entry name" value="PNPase"/>
</dbReference>
<dbReference type="InterPro" id="IPR027408">
    <property type="entry name" value="PNPase/RNase_PH_dom_sf"/>
</dbReference>
<dbReference type="InterPro" id="IPR015848">
    <property type="entry name" value="PNPase_PH_RNA-bd_bac/org-type"/>
</dbReference>
<dbReference type="InterPro" id="IPR020568">
    <property type="entry name" value="Ribosomal_Su5_D2-typ_SF"/>
</dbReference>
<dbReference type="InterPro" id="IPR003029">
    <property type="entry name" value="S1_domain"/>
</dbReference>
<dbReference type="NCBIfam" id="TIGR03591">
    <property type="entry name" value="polynuc_phos"/>
    <property type="match status" value="1"/>
</dbReference>
<dbReference type="NCBIfam" id="NF008805">
    <property type="entry name" value="PRK11824.1"/>
    <property type="match status" value="1"/>
</dbReference>
<dbReference type="PANTHER" id="PTHR11252">
    <property type="entry name" value="POLYRIBONUCLEOTIDE NUCLEOTIDYLTRANSFERASE"/>
    <property type="match status" value="1"/>
</dbReference>
<dbReference type="PANTHER" id="PTHR11252:SF0">
    <property type="entry name" value="POLYRIBONUCLEOTIDE NUCLEOTIDYLTRANSFERASE 1, MITOCHONDRIAL"/>
    <property type="match status" value="1"/>
</dbReference>
<dbReference type="Pfam" id="PF00013">
    <property type="entry name" value="KH_1"/>
    <property type="match status" value="1"/>
</dbReference>
<dbReference type="Pfam" id="PF03726">
    <property type="entry name" value="PNPase"/>
    <property type="match status" value="1"/>
</dbReference>
<dbReference type="Pfam" id="PF01138">
    <property type="entry name" value="RNase_PH"/>
    <property type="match status" value="2"/>
</dbReference>
<dbReference type="Pfam" id="PF03725">
    <property type="entry name" value="RNase_PH_C"/>
    <property type="match status" value="2"/>
</dbReference>
<dbReference type="Pfam" id="PF00575">
    <property type="entry name" value="S1"/>
    <property type="match status" value="1"/>
</dbReference>
<dbReference type="PIRSF" id="PIRSF005499">
    <property type="entry name" value="PNPase"/>
    <property type="match status" value="1"/>
</dbReference>
<dbReference type="SMART" id="SM00322">
    <property type="entry name" value="KH"/>
    <property type="match status" value="1"/>
</dbReference>
<dbReference type="SMART" id="SM00316">
    <property type="entry name" value="S1"/>
    <property type="match status" value="1"/>
</dbReference>
<dbReference type="SUPFAM" id="SSF54791">
    <property type="entry name" value="Eukaryotic type KH-domain (KH-domain type I)"/>
    <property type="match status" value="1"/>
</dbReference>
<dbReference type="SUPFAM" id="SSF50249">
    <property type="entry name" value="Nucleic acid-binding proteins"/>
    <property type="match status" value="1"/>
</dbReference>
<dbReference type="SUPFAM" id="SSF55666">
    <property type="entry name" value="Ribonuclease PH domain 2-like"/>
    <property type="match status" value="2"/>
</dbReference>
<dbReference type="SUPFAM" id="SSF54211">
    <property type="entry name" value="Ribosomal protein S5 domain 2-like"/>
    <property type="match status" value="2"/>
</dbReference>
<dbReference type="PROSITE" id="PS50084">
    <property type="entry name" value="KH_TYPE_1"/>
    <property type="match status" value="1"/>
</dbReference>
<dbReference type="PROSITE" id="PS50126">
    <property type="entry name" value="S1"/>
    <property type="match status" value="1"/>
</dbReference>
<reference key="1">
    <citation type="journal article" date="2009" name="BMC Genomics">
        <title>Complete genome sequence of the sugarcane nitrogen-fixing endophyte Gluconacetobacter diazotrophicus Pal5.</title>
        <authorList>
            <person name="Bertalan M."/>
            <person name="Albano R."/>
            <person name="de Padua V."/>
            <person name="Rouws L."/>
            <person name="Rojas C."/>
            <person name="Hemerly A."/>
            <person name="Teixeira K."/>
            <person name="Schwab S."/>
            <person name="Araujo J."/>
            <person name="Oliveira A."/>
            <person name="Franca L."/>
            <person name="Magalhaes V."/>
            <person name="Alqueres S."/>
            <person name="Cardoso A."/>
            <person name="Almeida W."/>
            <person name="Loureiro M.M."/>
            <person name="Nogueira E."/>
            <person name="Cidade D."/>
            <person name="Oliveira D."/>
            <person name="Simao T."/>
            <person name="Macedo J."/>
            <person name="Valadao A."/>
            <person name="Dreschsel M."/>
            <person name="Freitas F."/>
            <person name="Vidal M."/>
            <person name="Guedes H."/>
            <person name="Rodrigues E."/>
            <person name="Meneses C."/>
            <person name="Brioso P."/>
            <person name="Pozzer L."/>
            <person name="Figueiredo D."/>
            <person name="Montano H."/>
            <person name="Junior J."/>
            <person name="de Souza Filho G."/>
            <person name="Martin Quintana Flores V."/>
            <person name="Ferreira B."/>
            <person name="Branco A."/>
            <person name="Gonzalez P."/>
            <person name="Guillobel H."/>
            <person name="Lemos M."/>
            <person name="Seibel L."/>
            <person name="Macedo J."/>
            <person name="Alves-Ferreira M."/>
            <person name="Sachetto-Martins G."/>
            <person name="Coelho A."/>
            <person name="Santos E."/>
            <person name="Amaral G."/>
            <person name="Neves A."/>
            <person name="Pacheco A.B."/>
            <person name="Carvalho D."/>
            <person name="Lery L."/>
            <person name="Bisch P."/>
            <person name="Rossle S.C."/>
            <person name="Urmenyi T."/>
            <person name="Rael Pereira A."/>
            <person name="Silva R."/>
            <person name="Rondinelli E."/>
            <person name="von Kruger W."/>
            <person name="Martins O."/>
            <person name="Baldani J.I."/>
            <person name="Ferreira P.C."/>
        </authorList>
    </citation>
    <scope>NUCLEOTIDE SEQUENCE [LARGE SCALE GENOMIC DNA]</scope>
    <source>
        <strain>ATCC 49037 / DSM 5601 / CCUG 37298 / CIP 103539 / LMG 7603 / PAl5</strain>
    </source>
</reference>
<reference key="2">
    <citation type="journal article" date="2010" name="Stand. Genomic Sci.">
        <title>Two genome sequences of the same bacterial strain, Gluconacetobacter diazotrophicus PAl 5, suggest a new standard in genome sequence submission.</title>
        <authorList>
            <person name="Giongo A."/>
            <person name="Tyler H.L."/>
            <person name="Zipperer U.N."/>
            <person name="Triplett E.W."/>
        </authorList>
    </citation>
    <scope>NUCLEOTIDE SEQUENCE [LARGE SCALE GENOMIC DNA]</scope>
    <source>
        <strain>ATCC 49037 / DSM 5601 / CCUG 37298 / CIP 103539 / LMG 7603 / PAl5</strain>
    </source>
</reference>
<feature type="chain" id="PRO_0000329665" description="Polyribonucleotide nucleotidyltransferase">
    <location>
        <begin position="1"/>
        <end position="712"/>
    </location>
</feature>
<feature type="domain" description="KH" evidence="1">
    <location>
        <begin position="552"/>
        <end position="611"/>
    </location>
</feature>
<feature type="domain" description="S1 motif" evidence="1">
    <location>
        <begin position="621"/>
        <end position="689"/>
    </location>
</feature>
<feature type="binding site" evidence="1">
    <location>
        <position position="485"/>
    </location>
    <ligand>
        <name>Mg(2+)</name>
        <dbReference type="ChEBI" id="CHEBI:18420"/>
    </ligand>
</feature>
<feature type="binding site" evidence="1">
    <location>
        <position position="491"/>
    </location>
    <ligand>
        <name>Mg(2+)</name>
        <dbReference type="ChEBI" id="CHEBI:18420"/>
    </ligand>
</feature>
<name>PNP_GLUDA</name>
<evidence type="ECO:0000255" key="1">
    <source>
        <dbReference type="HAMAP-Rule" id="MF_01595"/>
    </source>
</evidence>
<keyword id="KW-0963">Cytoplasm</keyword>
<keyword id="KW-0460">Magnesium</keyword>
<keyword id="KW-0479">Metal-binding</keyword>
<keyword id="KW-0548">Nucleotidyltransferase</keyword>
<keyword id="KW-1185">Reference proteome</keyword>
<keyword id="KW-0694">RNA-binding</keyword>
<keyword id="KW-0808">Transferase</keyword>
<organism>
    <name type="scientific">Gluconacetobacter diazotrophicus (strain ATCC 49037 / DSM 5601 / CCUG 37298 / CIP 103539 / LMG 7603 / PAl5)</name>
    <dbReference type="NCBI Taxonomy" id="272568"/>
    <lineage>
        <taxon>Bacteria</taxon>
        <taxon>Pseudomonadati</taxon>
        <taxon>Pseudomonadota</taxon>
        <taxon>Alphaproteobacteria</taxon>
        <taxon>Acetobacterales</taxon>
        <taxon>Acetobacteraceae</taxon>
        <taxon>Gluconacetobacter</taxon>
    </lineage>
</organism>
<comment type="function">
    <text evidence="1">Involved in mRNA degradation. Catalyzes the phosphorolysis of single-stranded polyribonucleotides processively in the 3'- to 5'-direction.</text>
</comment>
<comment type="catalytic activity">
    <reaction evidence="1">
        <text>RNA(n+1) + phosphate = RNA(n) + a ribonucleoside 5'-diphosphate</text>
        <dbReference type="Rhea" id="RHEA:22096"/>
        <dbReference type="Rhea" id="RHEA-COMP:14527"/>
        <dbReference type="Rhea" id="RHEA-COMP:17342"/>
        <dbReference type="ChEBI" id="CHEBI:43474"/>
        <dbReference type="ChEBI" id="CHEBI:57930"/>
        <dbReference type="ChEBI" id="CHEBI:140395"/>
        <dbReference type="EC" id="2.7.7.8"/>
    </reaction>
</comment>
<comment type="cofactor">
    <cofactor evidence="1">
        <name>Mg(2+)</name>
        <dbReference type="ChEBI" id="CHEBI:18420"/>
    </cofactor>
</comment>
<comment type="subcellular location">
    <subcellularLocation>
        <location evidence="1">Cytoplasm</location>
    </subcellularLocation>
</comment>
<comment type="similarity">
    <text evidence="1">Belongs to the polyribonucleotide nucleotidyltransferase family.</text>
</comment>
<protein>
    <recommendedName>
        <fullName evidence="1">Polyribonucleotide nucleotidyltransferase</fullName>
        <ecNumber evidence="1">2.7.7.8</ecNumber>
    </recommendedName>
    <alternativeName>
        <fullName evidence="1">Polynucleotide phosphorylase</fullName>
        <shortName evidence="1">PNPase</shortName>
    </alternativeName>
</protein>
<sequence length="712" mass="76309">MFNYYRKEIEWGGRPLVLETGKIARQADGAVVVTYGDTVVLCTAVGARSVKPGQDFFPLTVNYQEKAFAAGKIPGGFFKREGRPSEIEVLNSRLIDRPIRPLFPENFRNEVQVVATVLSHDLENDPAIAALIGCSAALTLSGIPFFGPVAACRVGYADGAYILNPTLPEMKESALDLVVAGTSEGVLMVESEASELSEDVMLGAVTFGHEAFQAVIDAIISLAEHAAKAPWDLAEPSAEEIALKQRIDTLGRAAIAEAYQERVKQQRYKKVGAAKEAVLAALATEGLDVTAAKPILKDLEADVVRSAVLDTGYRIDGRDLKTVRPIVSEVGILPRAHGSALFTRGETQALVVATLGTAQDEQVIDALEGEYRTNFMLHYNFPPYSVGECGRMGSPGRREIGHGKLAWRAIHPLLPGKDTFPYTMRIVSEITESNGSSSMATVCGTSLALMDAGVPLKRPVAGIAMGLIKEDRGFAVLSDILGDEDHLGDMDFKVAGTESGITALQMDIKITSITPEIMKIALGQARDGRLHILGEMSKALTEGRSDVSSTAPKITTISVPKEKIRDVIGQGGKVIREIVEYSGAKIDINDDGTIMIAASSEDQATRAIERIRGIVAEPELGAIYTGKVVKTADFGAFVNFLGARDGLVHISELAQGRVAKTTDVVNQGDVVKVKVLGFDDRGKVKLSMRVVDQQTGADITESVGERPGRPAR</sequence>
<accession>A9HF35</accession>
<accession>B5ZDK5</accession>
<gene>
    <name evidence="1" type="primary">pnp</name>
    <name type="ordered locus">GDI1371</name>
    <name type="ordered locus">Gdia_2075</name>
</gene>
<proteinExistence type="inferred from homology"/>